<comment type="function">
    <text evidence="1">ATPase subunit of a proteasome-like degradation complex; this subunit has chaperone activity. The binding of ATP and its subsequent hydrolysis by HslU are essential for unfolding of protein substrates subsequently hydrolyzed by HslV. HslU recognizes the N-terminal part of its protein substrates and unfolds these before they are guided to HslV for hydrolysis.</text>
</comment>
<comment type="subunit">
    <text evidence="1">A double ring-shaped homohexamer of HslV is capped on each side by a ring-shaped HslU homohexamer. The assembly of the HslU/HslV complex is dependent on binding of ATP.</text>
</comment>
<comment type="subcellular location">
    <subcellularLocation>
        <location evidence="1">Cytoplasm</location>
    </subcellularLocation>
</comment>
<comment type="similarity">
    <text evidence="1">Belongs to the ClpX chaperone family. HslU subfamily.</text>
</comment>
<gene>
    <name evidence="1" type="primary">hslU</name>
    <name type="ordered locus">Shewmr7_0433</name>
</gene>
<protein>
    <recommendedName>
        <fullName evidence="1">ATP-dependent protease ATPase subunit HslU</fullName>
    </recommendedName>
    <alternativeName>
        <fullName evidence="1">Unfoldase HslU</fullName>
    </alternativeName>
</protein>
<keyword id="KW-0067">ATP-binding</keyword>
<keyword id="KW-0143">Chaperone</keyword>
<keyword id="KW-0963">Cytoplasm</keyword>
<keyword id="KW-0547">Nucleotide-binding</keyword>
<keyword id="KW-0346">Stress response</keyword>
<evidence type="ECO:0000255" key="1">
    <source>
        <dbReference type="HAMAP-Rule" id="MF_00249"/>
    </source>
</evidence>
<evidence type="ECO:0000256" key="2">
    <source>
        <dbReference type="SAM" id="MobiDB-lite"/>
    </source>
</evidence>
<reference key="1">
    <citation type="submission" date="2006-08" db="EMBL/GenBank/DDBJ databases">
        <title>Complete sequence of chromosome 1 of Shewanella sp. MR-7.</title>
        <authorList>
            <person name="Copeland A."/>
            <person name="Lucas S."/>
            <person name="Lapidus A."/>
            <person name="Barry K."/>
            <person name="Detter J.C."/>
            <person name="Glavina del Rio T."/>
            <person name="Hammon N."/>
            <person name="Israni S."/>
            <person name="Dalin E."/>
            <person name="Tice H."/>
            <person name="Pitluck S."/>
            <person name="Kiss H."/>
            <person name="Brettin T."/>
            <person name="Bruce D."/>
            <person name="Han C."/>
            <person name="Tapia R."/>
            <person name="Gilna P."/>
            <person name="Schmutz J."/>
            <person name="Larimer F."/>
            <person name="Land M."/>
            <person name="Hauser L."/>
            <person name="Kyrpides N."/>
            <person name="Mikhailova N."/>
            <person name="Nealson K."/>
            <person name="Konstantinidis K."/>
            <person name="Klappenbach J."/>
            <person name="Tiedje J."/>
            <person name="Richardson P."/>
        </authorList>
    </citation>
    <scope>NUCLEOTIDE SEQUENCE [LARGE SCALE GENOMIC DNA]</scope>
    <source>
        <strain>MR-7</strain>
    </source>
</reference>
<feature type="chain" id="PRO_1000012808" description="ATP-dependent protease ATPase subunit HslU">
    <location>
        <begin position="1"/>
        <end position="442"/>
    </location>
</feature>
<feature type="region of interest" description="Disordered" evidence="2">
    <location>
        <begin position="136"/>
        <end position="156"/>
    </location>
</feature>
<feature type="binding site" evidence="1">
    <location>
        <position position="18"/>
    </location>
    <ligand>
        <name>ATP</name>
        <dbReference type="ChEBI" id="CHEBI:30616"/>
    </ligand>
</feature>
<feature type="binding site" evidence="1">
    <location>
        <begin position="60"/>
        <end position="65"/>
    </location>
    <ligand>
        <name>ATP</name>
        <dbReference type="ChEBI" id="CHEBI:30616"/>
    </ligand>
</feature>
<feature type="binding site" evidence="1">
    <location>
        <position position="255"/>
    </location>
    <ligand>
        <name>ATP</name>
        <dbReference type="ChEBI" id="CHEBI:30616"/>
    </ligand>
</feature>
<feature type="binding site" evidence="1">
    <location>
        <position position="320"/>
    </location>
    <ligand>
        <name>ATP</name>
        <dbReference type="ChEBI" id="CHEBI:30616"/>
    </ligand>
</feature>
<feature type="binding site" evidence="1">
    <location>
        <position position="392"/>
    </location>
    <ligand>
        <name>ATP</name>
        <dbReference type="ChEBI" id="CHEBI:30616"/>
    </ligand>
</feature>
<name>HSLU_SHESR</name>
<sequence>MSEMTPREIVHELDAHIIGQKKAKRSVAVALRNRWRRMQLDADFRQEVTPKNILMIGPTGVGKTEIARRLAKLANAPFIKVEATKFTEVGYVGKEVEQIIRDLTDIAIKLTREQQMGKCRQRAEEHAEERILDALLPKPKNDWDSTDSDANSNTRQIFRKKLREGQLDDKEIDIDVAQPQVGIEIMSPPGMEEMTNQLQSLFKNMGQAPAKRRKMKIKEAFKLLIEEEAAKLVNQEDLKEQAIELVEQHGIVFLDEIDKICKRGETSGPDVSREGVQRDLLPLVEGCTVTTKHGMVKTDHILFIASGAFQMAKPSDLIPELQGRLPIRVELDALSADDFKRILTEPHASLTEQYIALMATEGVTIEFAESGIESIAKAAWQVNERTENIGARRLHTVMEKLMEDISYEASDKSGSSFVIDADYVSAHLDNLVQDEDLSRFIL</sequence>
<proteinExistence type="inferred from homology"/>
<dbReference type="EMBL" id="CP000444">
    <property type="protein sequence ID" value="ABI41436.1"/>
    <property type="molecule type" value="Genomic_DNA"/>
</dbReference>
<dbReference type="SMR" id="Q0HZL9"/>
<dbReference type="KEGG" id="shm:Shewmr7_0433"/>
<dbReference type="HOGENOM" id="CLU_033123_0_0_6"/>
<dbReference type="GO" id="GO:0009376">
    <property type="term" value="C:HslUV protease complex"/>
    <property type="evidence" value="ECO:0007669"/>
    <property type="project" value="UniProtKB-UniRule"/>
</dbReference>
<dbReference type="GO" id="GO:0005524">
    <property type="term" value="F:ATP binding"/>
    <property type="evidence" value="ECO:0007669"/>
    <property type="project" value="UniProtKB-UniRule"/>
</dbReference>
<dbReference type="GO" id="GO:0016887">
    <property type="term" value="F:ATP hydrolysis activity"/>
    <property type="evidence" value="ECO:0007669"/>
    <property type="project" value="InterPro"/>
</dbReference>
<dbReference type="GO" id="GO:0008233">
    <property type="term" value="F:peptidase activity"/>
    <property type="evidence" value="ECO:0007669"/>
    <property type="project" value="InterPro"/>
</dbReference>
<dbReference type="GO" id="GO:0036402">
    <property type="term" value="F:proteasome-activating activity"/>
    <property type="evidence" value="ECO:0007669"/>
    <property type="project" value="UniProtKB-UniRule"/>
</dbReference>
<dbReference type="GO" id="GO:0043335">
    <property type="term" value="P:protein unfolding"/>
    <property type="evidence" value="ECO:0007669"/>
    <property type="project" value="UniProtKB-UniRule"/>
</dbReference>
<dbReference type="GO" id="GO:0051603">
    <property type="term" value="P:proteolysis involved in protein catabolic process"/>
    <property type="evidence" value="ECO:0007669"/>
    <property type="project" value="TreeGrafter"/>
</dbReference>
<dbReference type="CDD" id="cd19498">
    <property type="entry name" value="RecA-like_HslU"/>
    <property type="match status" value="1"/>
</dbReference>
<dbReference type="FunFam" id="1.10.8.10:FF:000028">
    <property type="entry name" value="ATP-dependent protease ATPase subunit HslU"/>
    <property type="match status" value="1"/>
</dbReference>
<dbReference type="FunFam" id="1.10.8.60:FF:000027">
    <property type="entry name" value="ATP-dependent protease ATPase subunit HslU"/>
    <property type="match status" value="1"/>
</dbReference>
<dbReference type="FunFam" id="3.40.50.300:FF:000213">
    <property type="entry name" value="ATP-dependent protease ATPase subunit HslU"/>
    <property type="match status" value="1"/>
</dbReference>
<dbReference type="FunFam" id="3.40.50.300:FF:000220">
    <property type="entry name" value="ATP-dependent protease ATPase subunit HslU"/>
    <property type="match status" value="1"/>
</dbReference>
<dbReference type="Gene3D" id="1.10.8.60">
    <property type="match status" value="1"/>
</dbReference>
<dbReference type="Gene3D" id="1.10.8.10">
    <property type="entry name" value="DNA helicase RuvA subunit, C-terminal domain"/>
    <property type="match status" value="1"/>
</dbReference>
<dbReference type="Gene3D" id="3.40.50.300">
    <property type="entry name" value="P-loop containing nucleotide triphosphate hydrolases"/>
    <property type="match status" value="2"/>
</dbReference>
<dbReference type="HAMAP" id="MF_00249">
    <property type="entry name" value="HslU"/>
    <property type="match status" value="1"/>
</dbReference>
<dbReference type="InterPro" id="IPR003593">
    <property type="entry name" value="AAA+_ATPase"/>
</dbReference>
<dbReference type="InterPro" id="IPR050052">
    <property type="entry name" value="ATP-dep_Clp_protease_ClpX"/>
</dbReference>
<dbReference type="InterPro" id="IPR003959">
    <property type="entry name" value="ATPase_AAA_core"/>
</dbReference>
<dbReference type="InterPro" id="IPR019489">
    <property type="entry name" value="Clp_ATPase_C"/>
</dbReference>
<dbReference type="InterPro" id="IPR004491">
    <property type="entry name" value="HslU"/>
</dbReference>
<dbReference type="InterPro" id="IPR027417">
    <property type="entry name" value="P-loop_NTPase"/>
</dbReference>
<dbReference type="NCBIfam" id="TIGR00390">
    <property type="entry name" value="hslU"/>
    <property type="match status" value="1"/>
</dbReference>
<dbReference type="NCBIfam" id="NF003544">
    <property type="entry name" value="PRK05201.1"/>
    <property type="match status" value="1"/>
</dbReference>
<dbReference type="PANTHER" id="PTHR48102">
    <property type="entry name" value="ATP-DEPENDENT CLP PROTEASE ATP-BINDING SUBUNIT CLPX-LIKE, MITOCHONDRIAL-RELATED"/>
    <property type="match status" value="1"/>
</dbReference>
<dbReference type="PANTHER" id="PTHR48102:SF3">
    <property type="entry name" value="ATP-DEPENDENT PROTEASE ATPASE SUBUNIT HSLU"/>
    <property type="match status" value="1"/>
</dbReference>
<dbReference type="Pfam" id="PF00004">
    <property type="entry name" value="AAA"/>
    <property type="match status" value="1"/>
</dbReference>
<dbReference type="Pfam" id="PF07724">
    <property type="entry name" value="AAA_2"/>
    <property type="match status" value="1"/>
</dbReference>
<dbReference type="SMART" id="SM00382">
    <property type="entry name" value="AAA"/>
    <property type="match status" value="1"/>
</dbReference>
<dbReference type="SMART" id="SM01086">
    <property type="entry name" value="ClpB_D2-small"/>
    <property type="match status" value="1"/>
</dbReference>
<dbReference type="SUPFAM" id="SSF52540">
    <property type="entry name" value="P-loop containing nucleoside triphosphate hydrolases"/>
    <property type="match status" value="1"/>
</dbReference>
<accession>Q0HZL9</accession>
<organism>
    <name type="scientific">Shewanella sp. (strain MR-7)</name>
    <dbReference type="NCBI Taxonomy" id="60481"/>
    <lineage>
        <taxon>Bacteria</taxon>
        <taxon>Pseudomonadati</taxon>
        <taxon>Pseudomonadota</taxon>
        <taxon>Gammaproteobacteria</taxon>
        <taxon>Alteromonadales</taxon>
        <taxon>Shewanellaceae</taxon>
        <taxon>Shewanella</taxon>
    </lineage>
</organism>